<reference key="1">
    <citation type="journal article" date="2006" name="Nature">
        <title>DNA sequence and analysis of human chromosome 8.</title>
        <authorList>
            <person name="Nusbaum C."/>
            <person name="Mikkelsen T.S."/>
            <person name="Zody M.C."/>
            <person name="Asakawa S."/>
            <person name="Taudien S."/>
            <person name="Garber M."/>
            <person name="Kodira C.D."/>
            <person name="Schueler M.G."/>
            <person name="Shimizu A."/>
            <person name="Whittaker C.A."/>
            <person name="Chang J.L."/>
            <person name="Cuomo C.A."/>
            <person name="Dewar K."/>
            <person name="FitzGerald M.G."/>
            <person name="Yang X."/>
            <person name="Allen N.R."/>
            <person name="Anderson S."/>
            <person name="Asakawa T."/>
            <person name="Blechschmidt K."/>
            <person name="Bloom T."/>
            <person name="Borowsky M.L."/>
            <person name="Butler J."/>
            <person name="Cook A."/>
            <person name="Corum B."/>
            <person name="DeArellano K."/>
            <person name="DeCaprio D."/>
            <person name="Dooley K.T."/>
            <person name="Dorris L. III"/>
            <person name="Engels R."/>
            <person name="Gloeckner G."/>
            <person name="Hafez N."/>
            <person name="Hagopian D.S."/>
            <person name="Hall J.L."/>
            <person name="Ishikawa S.K."/>
            <person name="Jaffe D.B."/>
            <person name="Kamat A."/>
            <person name="Kudoh J."/>
            <person name="Lehmann R."/>
            <person name="Lokitsang T."/>
            <person name="Macdonald P."/>
            <person name="Major J.E."/>
            <person name="Matthews C.D."/>
            <person name="Mauceli E."/>
            <person name="Menzel U."/>
            <person name="Mihalev A.H."/>
            <person name="Minoshima S."/>
            <person name="Murayama Y."/>
            <person name="Naylor J.W."/>
            <person name="Nicol R."/>
            <person name="Nguyen C."/>
            <person name="O'Leary S.B."/>
            <person name="O'Neill K."/>
            <person name="Parker S.C.J."/>
            <person name="Polley A."/>
            <person name="Raymond C.K."/>
            <person name="Reichwald K."/>
            <person name="Rodriguez J."/>
            <person name="Sasaki T."/>
            <person name="Schilhabel M."/>
            <person name="Siddiqui R."/>
            <person name="Smith C.L."/>
            <person name="Sneddon T.P."/>
            <person name="Talamas J.A."/>
            <person name="Tenzin P."/>
            <person name="Topham K."/>
            <person name="Venkataraman V."/>
            <person name="Wen G."/>
            <person name="Yamazaki S."/>
            <person name="Young S.K."/>
            <person name="Zeng Q."/>
            <person name="Zimmer A.R."/>
            <person name="Rosenthal A."/>
            <person name="Birren B.W."/>
            <person name="Platzer M."/>
            <person name="Shimizu N."/>
            <person name="Lander E.S."/>
        </authorList>
    </citation>
    <scope>NUCLEOTIDE SEQUENCE [LARGE SCALE GENOMIC DNA]</scope>
</reference>
<reference key="2">
    <citation type="journal article" date="2004" name="Genome Res.">
        <title>The status, quality, and expansion of the NIH full-length cDNA project: the Mammalian Gene Collection (MGC).</title>
        <authorList>
            <consortium name="The MGC Project Team"/>
        </authorList>
    </citation>
    <scope>NUCLEOTIDE SEQUENCE [LARGE SCALE MRNA] (ISOFORMS 1 AND 2)</scope>
    <scope>VARIANT ARG-1285</scope>
    <source>
        <tissue>Brain</tissue>
        <tissue>Skin</tissue>
        <tissue>Uterus</tissue>
    </source>
</reference>
<reference key="3">
    <citation type="journal article" date="2004" name="Nat. Genet.">
        <title>Complete sequencing and characterization of 21,243 full-length human cDNAs.</title>
        <authorList>
            <person name="Ota T."/>
            <person name="Suzuki Y."/>
            <person name="Nishikawa T."/>
            <person name="Otsuki T."/>
            <person name="Sugiyama T."/>
            <person name="Irie R."/>
            <person name="Wakamatsu A."/>
            <person name="Hayashi K."/>
            <person name="Sato H."/>
            <person name="Nagai K."/>
            <person name="Kimura K."/>
            <person name="Makita H."/>
            <person name="Sekine M."/>
            <person name="Obayashi M."/>
            <person name="Nishi T."/>
            <person name="Shibahara T."/>
            <person name="Tanaka T."/>
            <person name="Ishii S."/>
            <person name="Yamamoto J."/>
            <person name="Saito K."/>
            <person name="Kawai Y."/>
            <person name="Isono Y."/>
            <person name="Nakamura Y."/>
            <person name="Nagahari K."/>
            <person name="Murakami K."/>
            <person name="Yasuda T."/>
            <person name="Iwayanagi T."/>
            <person name="Wagatsuma M."/>
            <person name="Shiratori A."/>
            <person name="Sudo H."/>
            <person name="Hosoiri T."/>
            <person name="Kaku Y."/>
            <person name="Kodaira H."/>
            <person name="Kondo H."/>
            <person name="Sugawara M."/>
            <person name="Takahashi M."/>
            <person name="Kanda K."/>
            <person name="Yokoi T."/>
            <person name="Furuya T."/>
            <person name="Kikkawa E."/>
            <person name="Omura Y."/>
            <person name="Abe K."/>
            <person name="Kamihara K."/>
            <person name="Katsuta N."/>
            <person name="Sato K."/>
            <person name="Tanikawa M."/>
            <person name="Yamazaki M."/>
            <person name="Ninomiya K."/>
            <person name="Ishibashi T."/>
            <person name="Yamashita H."/>
            <person name="Murakawa K."/>
            <person name="Fujimori K."/>
            <person name="Tanai H."/>
            <person name="Kimata M."/>
            <person name="Watanabe M."/>
            <person name="Hiraoka S."/>
            <person name="Chiba Y."/>
            <person name="Ishida S."/>
            <person name="Ono Y."/>
            <person name="Takiguchi S."/>
            <person name="Watanabe S."/>
            <person name="Yosida M."/>
            <person name="Hotuta T."/>
            <person name="Kusano J."/>
            <person name="Kanehori K."/>
            <person name="Takahashi-Fujii A."/>
            <person name="Hara H."/>
            <person name="Tanase T.-O."/>
            <person name="Nomura Y."/>
            <person name="Togiya S."/>
            <person name="Komai F."/>
            <person name="Hara R."/>
            <person name="Takeuchi K."/>
            <person name="Arita M."/>
            <person name="Imose N."/>
            <person name="Musashino K."/>
            <person name="Yuuki H."/>
            <person name="Oshima A."/>
            <person name="Sasaki N."/>
            <person name="Aotsuka S."/>
            <person name="Yoshikawa Y."/>
            <person name="Matsunawa H."/>
            <person name="Ichihara T."/>
            <person name="Shiohata N."/>
            <person name="Sano S."/>
            <person name="Moriya S."/>
            <person name="Momiyama H."/>
            <person name="Satoh N."/>
            <person name="Takami S."/>
            <person name="Terashima Y."/>
            <person name="Suzuki O."/>
            <person name="Nakagawa S."/>
            <person name="Senoh A."/>
            <person name="Mizoguchi H."/>
            <person name="Goto Y."/>
            <person name="Shimizu F."/>
            <person name="Wakebe H."/>
            <person name="Hishigaki H."/>
            <person name="Watanabe T."/>
            <person name="Sugiyama A."/>
            <person name="Takemoto M."/>
            <person name="Kawakami B."/>
            <person name="Yamazaki M."/>
            <person name="Watanabe K."/>
            <person name="Kumagai A."/>
            <person name="Itakura S."/>
            <person name="Fukuzumi Y."/>
            <person name="Fujimori Y."/>
            <person name="Komiyama M."/>
            <person name="Tashiro H."/>
            <person name="Tanigami A."/>
            <person name="Fujiwara T."/>
            <person name="Ono T."/>
            <person name="Yamada K."/>
            <person name="Fujii Y."/>
            <person name="Ozaki K."/>
            <person name="Hirao M."/>
            <person name="Ohmori Y."/>
            <person name="Kawabata A."/>
            <person name="Hikiji T."/>
            <person name="Kobatake N."/>
            <person name="Inagaki H."/>
            <person name="Ikema Y."/>
            <person name="Okamoto S."/>
            <person name="Okitani R."/>
            <person name="Kawakami T."/>
            <person name="Noguchi S."/>
            <person name="Itoh T."/>
            <person name="Shigeta K."/>
            <person name="Senba T."/>
            <person name="Matsumura K."/>
            <person name="Nakajima Y."/>
            <person name="Mizuno T."/>
            <person name="Morinaga M."/>
            <person name="Sasaki M."/>
            <person name="Togashi T."/>
            <person name="Oyama M."/>
            <person name="Hata H."/>
            <person name="Watanabe M."/>
            <person name="Komatsu T."/>
            <person name="Mizushima-Sugano J."/>
            <person name="Satoh T."/>
            <person name="Shirai Y."/>
            <person name="Takahashi Y."/>
            <person name="Nakagawa K."/>
            <person name="Okumura K."/>
            <person name="Nagase T."/>
            <person name="Nomura N."/>
            <person name="Kikuchi H."/>
            <person name="Masuho Y."/>
            <person name="Yamashita R."/>
            <person name="Nakai K."/>
            <person name="Yada T."/>
            <person name="Nakamura Y."/>
            <person name="Ohara O."/>
            <person name="Isogai T."/>
            <person name="Sugano S."/>
        </authorList>
    </citation>
    <scope>NUCLEOTIDE SEQUENCE [LARGE SCALE MRNA] OF 900-1870 (ISOFORM 1)</scope>
    <scope>VARIANT ARG-1285</scope>
    <source>
        <tissue>Endothelial cell</tissue>
        <tissue>Liver</tissue>
    </source>
</reference>
<reference key="4">
    <citation type="journal article" date="2007" name="BMC Genomics">
        <title>The full-ORF clone resource of the German cDNA consortium.</title>
        <authorList>
            <person name="Bechtel S."/>
            <person name="Rosenfelder H."/>
            <person name="Duda A."/>
            <person name="Schmidt C.P."/>
            <person name="Ernst U."/>
            <person name="Wellenreuther R."/>
            <person name="Mehrle A."/>
            <person name="Schuster C."/>
            <person name="Bahr A."/>
            <person name="Bloecker H."/>
            <person name="Heubner D."/>
            <person name="Hoerlein A."/>
            <person name="Michel G."/>
            <person name="Wedler H."/>
            <person name="Koehrer K."/>
            <person name="Ottenwaelder B."/>
            <person name="Poustka A."/>
            <person name="Wiemann S."/>
            <person name="Schupp I."/>
        </authorList>
    </citation>
    <scope>NUCLEOTIDE SEQUENCE [LARGE SCALE MRNA] OF 1528-1870 (ISOFORM 1)</scope>
    <source>
        <tissue>Skeletal muscle</tissue>
    </source>
</reference>
<reference key="5">
    <citation type="journal article" date="2002" name="J. Cell Sci.">
        <title>Identification of an evolutionarily conserved superfamily of DOCK180-related proteins with guanine nucleotide exchange activity.</title>
        <authorList>
            <person name="Cote J.-F."/>
            <person name="Vuori K."/>
        </authorList>
    </citation>
    <scope>NOMENCLATURE</scope>
</reference>
<reference key="6">
    <citation type="journal article" date="2006" name="Nat. Biotechnol.">
        <title>A probability-based approach for high-throughput protein phosphorylation analysis and site localization.</title>
        <authorList>
            <person name="Beausoleil S.A."/>
            <person name="Villen J."/>
            <person name="Gerber S.A."/>
            <person name="Rush J."/>
            <person name="Gygi S.P."/>
        </authorList>
    </citation>
    <scope>PHOSPHORYLATION [LARGE SCALE ANALYSIS] AT THR-1814</scope>
    <scope>IDENTIFICATION BY MASS SPECTROMETRY [LARGE SCALE ANALYSIS]</scope>
    <source>
        <tissue>Cervix carcinoma</tissue>
    </source>
</reference>
<reference key="7">
    <citation type="journal article" date="2008" name="Mol. Cell">
        <title>Kinase-selective enrichment enables quantitative phosphoproteomics of the kinome across the cell cycle.</title>
        <authorList>
            <person name="Daub H."/>
            <person name="Olsen J.V."/>
            <person name="Bairlein M."/>
            <person name="Gnad F."/>
            <person name="Oppermann F.S."/>
            <person name="Korner R."/>
            <person name="Greff Z."/>
            <person name="Keri G."/>
            <person name="Stemmann O."/>
            <person name="Mann M."/>
        </authorList>
    </citation>
    <scope>PHOSPHORYLATION [LARGE SCALE ANALYSIS] AT SER-365</scope>
    <scope>IDENTIFICATION BY MASS SPECTROMETRY [LARGE SCALE ANALYSIS]</scope>
    <source>
        <tissue>Cervix carcinoma</tissue>
    </source>
</reference>
<reference key="8">
    <citation type="journal article" date="2008" name="Proc. Natl. Acad. Sci. U.S.A.">
        <title>A quantitative atlas of mitotic phosphorylation.</title>
        <authorList>
            <person name="Dephoure N."/>
            <person name="Zhou C."/>
            <person name="Villen J."/>
            <person name="Beausoleil S.A."/>
            <person name="Bakalarski C.E."/>
            <person name="Elledge S.J."/>
            <person name="Gygi S.P."/>
        </authorList>
    </citation>
    <scope>PHOSPHORYLATION [LARGE SCALE ANALYSIS] AT SER-1789; THR-1794; SER-1834 AND SER-1869</scope>
    <scope>IDENTIFICATION BY MASS SPECTROMETRY [LARGE SCALE ANALYSIS]</scope>
    <source>
        <tissue>Cervix carcinoma</tissue>
    </source>
</reference>
<reference key="9">
    <citation type="journal article" date="2009" name="J. Biol. Chem.">
        <title>DOCK5 and DOCK1 regulate Caco-2 intestinal epithelial cell spreading and migration on collagen IV.</title>
        <authorList>
            <person name="Sanders M.A."/>
            <person name="Ampasala D."/>
            <person name="Basson M.D."/>
        </authorList>
    </citation>
    <scope>FUNCTION</scope>
    <scope>INTERACTION WITH CRK AND CRKL</scope>
    <scope>SUBCELLULAR LOCATION</scope>
</reference>
<reference key="10">
    <citation type="journal article" date="2009" name="Mol. Cell. Proteomics">
        <title>Large-scale proteomics analysis of the human kinome.</title>
        <authorList>
            <person name="Oppermann F.S."/>
            <person name="Gnad F."/>
            <person name="Olsen J.V."/>
            <person name="Hornberger R."/>
            <person name="Greff Z."/>
            <person name="Keri G."/>
            <person name="Mann M."/>
            <person name="Daub H."/>
        </authorList>
    </citation>
    <scope>IDENTIFICATION BY MASS SPECTROMETRY [LARGE SCALE ANALYSIS]</scope>
</reference>
<reference key="11">
    <citation type="journal article" date="2009" name="Sci. Signal.">
        <title>Quantitative phosphoproteomic analysis of T cell receptor signaling reveals system-wide modulation of protein-protein interactions.</title>
        <authorList>
            <person name="Mayya V."/>
            <person name="Lundgren D.H."/>
            <person name="Hwang S.-I."/>
            <person name="Rezaul K."/>
            <person name="Wu L."/>
            <person name="Eng J.K."/>
            <person name="Rodionov V."/>
            <person name="Han D.K."/>
        </authorList>
    </citation>
    <scope>PHOSPHORYLATION [LARGE SCALE ANALYSIS] AT SER-1834</scope>
    <scope>IDENTIFICATION BY MASS SPECTROMETRY [LARGE SCALE ANALYSIS]</scope>
    <source>
        <tissue>Leukemic T-cell</tissue>
    </source>
</reference>
<reference key="12">
    <citation type="journal article" date="2009" name="Science">
        <title>Lysine acetylation targets protein complexes and co-regulates major cellular functions.</title>
        <authorList>
            <person name="Choudhary C."/>
            <person name="Kumar C."/>
            <person name="Gnad F."/>
            <person name="Nielsen M.L."/>
            <person name="Rehman M."/>
            <person name="Walther T.C."/>
            <person name="Olsen J.V."/>
            <person name="Mann M."/>
        </authorList>
    </citation>
    <scope>ACETYLATION [LARGE SCALE ANALYSIS] AT LYS-818</scope>
    <scope>IDENTIFICATION BY MASS SPECTROMETRY [LARGE SCALE ANALYSIS]</scope>
</reference>
<reference key="13">
    <citation type="journal article" date="2010" name="Sci. Signal.">
        <title>Quantitative phosphoproteomics reveals widespread full phosphorylation site occupancy during mitosis.</title>
        <authorList>
            <person name="Olsen J.V."/>
            <person name="Vermeulen M."/>
            <person name="Santamaria A."/>
            <person name="Kumar C."/>
            <person name="Miller M.L."/>
            <person name="Jensen L.J."/>
            <person name="Gnad F."/>
            <person name="Cox J."/>
            <person name="Jensen T.S."/>
            <person name="Nigg E.A."/>
            <person name="Brunak S."/>
            <person name="Mann M."/>
        </authorList>
    </citation>
    <scope>PHOSPHORYLATION [LARGE SCALE ANALYSIS] AT SER-1766</scope>
    <scope>IDENTIFICATION BY MASS SPECTROMETRY [LARGE SCALE ANALYSIS]</scope>
    <source>
        <tissue>Cervix carcinoma</tissue>
    </source>
</reference>
<reference key="14">
    <citation type="journal article" date="2011" name="BMC Syst. Biol.">
        <title>Initial characterization of the human central proteome.</title>
        <authorList>
            <person name="Burkard T.R."/>
            <person name="Planyavsky M."/>
            <person name="Kaupe I."/>
            <person name="Breitwieser F.P."/>
            <person name="Buerckstuemmer T."/>
            <person name="Bennett K.L."/>
            <person name="Superti-Furga G."/>
            <person name="Colinge J."/>
        </authorList>
    </citation>
    <scope>IDENTIFICATION BY MASS SPECTROMETRY [LARGE SCALE ANALYSIS]</scope>
</reference>
<reference key="15">
    <citation type="journal article" date="2013" name="J. Proteome Res.">
        <title>Toward a comprehensive characterization of a human cancer cell phosphoproteome.</title>
        <authorList>
            <person name="Zhou H."/>
            <person name="Di Palma S."/>
            <person name="Preisinger C."/>
            <person name="Peng M."/>
            <person name="Polat A.N."/>
            <person name="Heck A.J."/>
            <person name="Mohammed S."/>
        </authorList>
    </citation>
    <scope>PHOSPHORYLATION [LARGE SCALE ANALYSIS] AT SER-1756; SER-1766; SER-1789 AND SER-1834</scope>
    <scope>IDENTIFICATION BY MASS SPECTROMETRY [LARGE SCALE ANALYSIS]</scope>
    <source>
        <tissue>Cervix carcinoma</tissue>
    </source>
</reference>
<sequence length="1870" mass="215309">MARWIPTKRQKYGVAIYNYNASQDVELSLQIGDTVHILEMYEGWYRGYTLQNKSKKGIFPETYIHLKEATVEDLGQHETVIPGELPLVQELTSTLREWAVIWRKLYVNNKLTLFRQLQQMTYSLIEWRSQILSGTLPKDELAELKKKVTAKIDHGNRMLGLDLVVRDDNGNILDPDETSTIALFKAHEVASKRIEEKIQEEKSILQNLDLRGQSIFSTIHTYGLYVNFKNFVCNIGEDAELFMALYDPDQSTFISENYLIRWGSNGMPKEIEKLNNLQAVFTDLSSMDLIRPRVSLVCQIVRVGHMELKEGKKHTCGLRRPFGVAVMDITDIIHGKVDDEEKQHFIPFQQIAMETYIRQRQLIMSPLITSHVIGENEPLTSVLNKVIAAKEVNHKGQGLWVSLKLLPGDLTQVQKNFSHLVDRSTAIARKMGFPEIILPGDVRNDIYVTLIHGEFDKGKKKTPKNVEVTMSVHDEEGKLLEKAIHPGAGYEGISEYKSVVYYQVKQPCWYETVKVSIAIEEVTRCHIRFTFRHRSSQETRDKSERAFGVAFVKLMNPDGTTLQDGRHDLVVYKGDNKKMEDAKFYLTLPGTKMEMEEKELQASKNLVTFTPSKDSTKDSFQIATLICSTKLTQNVDLLGLLNWRSNSQNIKHNLKKLMEVDGGEIVKFLQDTLDALFNIMMEMSDSETYDFLVFDALVFIISLIGDIKFQHFNPVLETYIYKHFSATLAYVKLSKVLNFYVANADDSSKTELLFAALKALKYLFRFIIQSRVLYLRFYGQSKDGDEFNNSIRQLFLAFNMLMDRPLEEAVKIKGAALKYLPSIINDVKLVFDPVELSVLFCKFIQSIPDNQLVRQKLNCMTKIVESTLFRQSECREVLLPLLTDQLSGQLDDNSNKPDHEASSQLLSNILEVLDRKDVGATAVHIQLIMERLLRRINRTVIGMNRQSPHIGSFVACMIALLQQMDDSHYSHYISTFKTRQDIIDFLMETFIMFKDLIGKNVYAKDWMVMNMTQNRVFLRAINQFAEVLTRFFMDQASFELQLWNNYFHLAVAFLTHESLQLETFSQAKRNKIVKKYGDMRKEIGFRIRDMWYNLGPHKIKFIPSMVGPILEVTLTPEVELRKATIPIFFDMMQCEFNFSGNGNFHMFENELITKLDQEVEGGRGDEQYKVLLEKLLLEHCRKHKYLSSSGEVFALLVSSLLENLLDYRTIIMQDESKENRMSCTVNVLNFYKEKKREDIYIRYLYKLRDLHRDCENYTEAAYTLLLHAELLQWSDKPCVPHLLQKDSYYVYTQQELKEKLYQEIISYFDKGKMWEKAIKLSKELAETYESKVFDYEGLGNLLKKRASFYENIIKAMRPQPEYFAVGYYGQGFPSFLRNKIFIYRGKEYERREDFSLRLLTQFPNAEKMTSTTPPGEDIKSSPKQYMQCFTVKPVMSLPPSYKDKPVPEQILNYYRANEVQQFRYSRPFRKGEKDPDNEFATMWIERTTYTTAYTFPGILKWFEVKQISTEEISPLENAIETMELTNERISNCVQQHAWDRSLSVHPLSMLLSGIVDPAVMGGFSNYEKAFFTEKYLQEHPEDQEKVELLKRLIALQMPLLTEGIRIHGEKLTEQLKPLHERLSSCFRELKEKVEKHYGVITLPPNLTERKQSRTGSIVLPYIMSSTLRRLSITSVTSSVVSTSSNSSDNAPSRPGSDGSILEPLLERRASSGARVEDLSLREENSENRISKFKRKDWSLSKSQVIAEKAPEPDLMSPTRKAQRPKSLQLMDNRLSPFHGSSPPQSTPLSPPPLTPKATRTLSSPSLQTDGIAATPVPPPPPPKSKPYEGSQRNSTELAPPLPVRREAKAPPPPPPKARKSGIPTSEPGSQ</sequence>
<proteinExistence type="evidence at protein level"/>
<dbReference type="EMBL" id="AC041005">
    <property type="status" value="NOT_ANNOTATED_CDS"/>
    <property type="molecule type" value="Genomic_DNA"/>
</dbReference>
<dbReference type="EMBL" id="AC091185">
    <property type="status" value="NOT_ANNOTATED_CDS"/>
    <property type="molecule type" value="Genomic_DNA"/>
</dbReference>
<dbReference type="EMBL" id="BC011877">
    <property type="protein sequence ID" value="AAH11877.1"/>
    <property type="molecule type" value="mRNA"/>
</dbReference>
<dbReference type="EMBL" id="BC041761">
    <property type="protein sequence ID" value="AAH41761.2"/>
    <property type="molecule type" value="mRNA"/>
</dbReference>
<dbReference type="EMBL" id="BC137175">
    <property type="protein sequence ID" value="AAI37176.1"/>
    <property type="molecule type" value="mRNA"/>
</dbReference>
<dbReference type="EMBL" id="BC137176">
    <property type="protein sequence ID" value="AAI37177.1"/>
    <property type="molecule type" value="mRNA"/>
</dbReference>
<dbReference type="EMBL" id="AK024687">
    <property type="protein sequence ID" value="BAB14962.1"/>
    <property type="status" value="ALT_INIT"/>
    <property type="molecule type" value="mRNA"/>
</dbReference>
<dbReference type="EMBL" id="AK126249">
    <property type="protein sequence ID" value="BAC86503.1"/>
    <property type="status" value="ALT_INIT"/>
    <property type="molecule type" value="mRNA"/>
</dbReference>
<dbReference type="EMBL" id="CR627414">
    <property type="protein sequence ID" value="CAH10503.1"/>
    <property type="molecule type" value="mRNA"/>
</dbReference>
<dbReference type="CCDS" id="CCDS6047.1">
    <molecule id="Q9H7D0-1"/>
</dbReference>
<dbReference type="RefSeq" id="NP_079216.4">
    <molecule id="Q9H7D0-1"/>
    <property type="nucleotide sequence ID" value="NM_024940.7"/>
</dbReference>
<dbReference type="PDB" id="7DPA">
    <property type="method" value="EM"/>
    <property type="resolution" value="3.80 A"/>
    <property type="chains" value="A/D=1-1642"/>
</dbReference>
<dbReference type="PDB" id="8JHK">
    <property type="method" value="EM"/>
    <property type="resolution" value="4.76 A"/>
    <property type="chains" value="B/E=1-1642"/>
</dbReference>
<dbReference type="PDB" id="8XM7">
    <property type="method" value="EM"/>
    <property type="resolution" value="4.91 A"/>
    <property type="chains" value="B=1-1642"/>
</dbReference>
<dbReference type="PDB" id="8ZJ2">
    <property type="method" value="EM"/>
    <property type="resolution" value="4.66 A"/>
    <property type="chains" value="B/F=1-1642"/>
</dbReference>
<dbReference type="PDB" id="8ZJI">
    <property type="method" value="EM"/>
    <property type="resolution" value="4.23 A"/>
    <property type="chains" value="B/E=1-1642"/>
</dbReference>
<dbReference type="PDB" id="8ZJJ">
    <property type="method" value="EM"/>
    <property type="resolution" value="4.23 A"/>
    <property type="chains" value="B/E=1-1642"/>
</dbReference>
<dbReference type="PDB" id="8ZJK">
    <property type="method" value="EM"/>
    <property type="resolution" value="4.23 A"/>
    <property type="chains" value="B/E=1-1642"/>
</dbReference>
<dbReference type="PDB" id="8ZJL">
    <property type="method" value="EM"/>
    <property type="resolution" value="4.31 A"/>
    <property type="chains" value="B/E=1-1642"/>
</dbReference>
<dbReference type="PDB" id="8ZJM">
    <property type="method" value="EM"/>
    <property type="resolution" value="4.52 A"/>
    <property type="chains" value="B/E=1-1642"/>
</dbReference>
<dbReference type="PDBsum" id="7DPA"/>
<dbReference type="PDBsum" id="8JHK"/>
<dbReference type="PDBsum" id="8XM7"/>
<dbReference type="PDBsum" id="8ZJ2"/>
<dbReference type="PDBsum" id="8ZJI"/>
<dbReference type="PDBsum" id="8ZJJ"/>
<dbReference type="PDBsum" id="8ZJK"/>
<dbReference type="PDBsum" id="8ZJL"/>
<dbReference type="PDBsum" id="8ZJM"/>
<dbReference type="EMDB" id="EMD-30802"/>
<dbReference type="EMDB" id="EMD-36271"/>
<dbReference type="EMDB" id="EMD-38466"/>
<dbReference type="EMDB" id="EMD-60136"/>
<dbReference type="EMDB" id="EMD-60146"/>
<dbReference type="EMDB" id="EMD-60147"/>
<dbReference type="EMDB" id="EMD-60148"/>
<dbReference type="EMDB" id="EMD-60149"/>
<dbReference type="EMDB" id="EMD-60150"/>
<dbReference type="SMR" id="Q9H7D0"/>
<dbReference type="BioGRID" id="123062">
    <property type="interactions" value="120"/>
</dbReference>
<dbReference type="ELM" id="Q9H7D0"/>
<dbReference type="FunCoup" id="Q9H7D0">
    <property type="interactions" value="1502"/>
</dbReference>
<dbReference type="IntAct" id="Q9H7D0">
    <property type="interactions" value="96"/>
</dbReference>
<dbReference type="MINT" id="Q9H7D0"/>
<dbReference type="STRING" id="9606.ENSP00000276440"/>
<dbReference type="BindingDB" id="Q9H7D0"/>
<dbReference type="ChEMBL" id="CHEMBL4739705"/>
<dbReference type="GlyGen" id="Q9H7D0">
    <property type="glycosylation" value="4 sites, 2 N-linked glycans (2 sites), 1 O-linked glycan (2 sites)"/>
</dbReference>
<dbReference type="iPTMnet" id="Q9H7D0"/>
<dbReference type="MetOSite" id="Q9H7D0"/>
<dbReference type="PhosphoSitePlus" id="Q9H7D0"/>
<dbReference type="BioMuta" id="DOCK5"/>
<dbReference type="DMDM" id="119370380"/>
<dbReference type="jPOST" id="Q9H7D0"/>
<dbReference type="MassIVE" id="Q9H7D0"/>
<dbReference type="PaxDb" id="9606-ENSP00000276440"/>
<dbReference type="PeptideAtlas" id="Q9H7D0"/>
<dbReference type="ProteomicsDB" id="81105">
    <molecule id="Q9H7D0-1"/>
</dbReference>
<dbReference type="ProteomicsDB" id="81106">
    <molecule id="Q9H7D0-2"/>
</dbReference>
<dbReference type="Pumba" id="Q9H7D0"/>
<dbReference type="Antibodypedia" id="2898">
    <property type="antibodies" value="81 antibodies from 15 providers"/>
</dbReference>
<dbReference type="DNASU" id="80005"/>
<dbReference type="Ensembl" id="ENST00000276440.12">
    <molecule id="Q9H7D0-1"/>
    <property type="protein sequence ID" value="ENSP00000276440.7"/>
    <property type="gene ID" value="ENSG00000147459.18"/>
</dbReference>
<dbReference type="Ensembl" id="ENST00000481100.5">
    <molecule id="Q9H7D0-2"/>
    <property type="protein sequence ID" value="ENSP00000429737.1"/>
    <property type="gene ID" value="ENSG00000147459.18"/>
</dbReference>
<dbReference type="GeneID" id="80005"/>
<dbReference type="KEGG" id="hsa:80005"/>
<dbReference type="MANE-Select" id="ENST00000276440.12">
    <property type="protein sequence ID" value="ENSP00000276440.7"/>
    <property type="RefSeq nucleotide sequence ID" value="NM_024940.8"/>
    <property type="RefSeq protein sequence ID" value="NP_079216.4"/>
</dbReference>
<dbReference type="UCSC" id="uc003xef.4">
    <molecule id="Q9H7D0-1"/>
    <property type="organism name" value="human"/>
</dbReference>
<dbReference type="AGR" id="HGNC:23476"/>
<dbReference type="CTD" id="80005"/>
<dbReference type="DisGeNET" id="80005"/>
<dbReference type="GeneCards" id="DOCK5"/>
<dbReference type="HGNC" id="HGNC:23476">
    <property type="gene designation" value="DOCK5"/>
</dbReference>
<dbReference type="HPA" id="ENSG00000147459">
    <property type="expression patterns" value="Low tissue specificity"/>
</dbReference>
<dbReference type="MIM" id="616904">
    <property type="type" value="gene"/>
</dbReference>
<dbReference type="neXtProt" id="NX_Q9H7D0"/>
<dbReference type="OpenTargets" id="ENSG00000147459"/>
<dbReference type="PharmGKB" id="PA134932307"/>
<dbReference type="VEuPathDB" id="HostDB:ENSG00000147459"/>
<dbReference type="eggNOG" id="KOG1998">
    <property type="taxonomic scope" value="Eukaryota"/>
</dbReference>
<dbReference type="GeneTree" id="ENSGT00940000157734"/>
<dbReference type="HOGENOM" id="CLU_039802_0_0_1"/>
<dbReference type="InParanoid" id="Q9H7D0"/>
<dbReference type="OMA" id="KPFHHSG"/>
<dbReference type="OrthoDB" id="18896at2759"/>
<dbReference type="PAN-GO" id="Q9H7D0">
    <property type="GO annotations" value="6 GO annotations based on evolutionary models"/>
</dbReference>
<dbReference type="PhylomeDB" id="Q9H7D0"/>
<dbReference type="TreeFam" id="TF300423"/>
<dbReference type="PathwayCommons" id="Q9H7D0"/>
<dbReference type="Reactome" id="R-HSA-9013149">
    <property type="pathway name" value="RAC1 GTPase cycle"/>
</dbReference>
<dbReference type="Reactome" id="R-HSA-9013408">
    <property type="pathway name" value="RHOG GTPase cycle"/>
</dbReference>
<dbReference type="Reactome" id="R-HSA-983231">
    <property type="pathway name" value="Factors involved in megakaryocyte development and platelet production"/>
</dbReference>
<dbReference type="SignaLink" id="Q9H7D0"/>
<dbReference type="BioGRID-ORCS" id="80005">
    <property type="hits" value="58 hits in 1160 CRISPR screens"/>
</dbReference>
<dbReference type="CD-CODE" id="FB4E32DD">
    <property type="entry name" value="Presynaptic clusters and postsynaptic densities"/>
</dbReference>
<dbReference type="ChiTaRS" id="DOCK5">
    <property type="organism name" value="human"/>
</dbReference>
<dbReference type="GeneWiki" id="Dock5"/>
<dbReference type="GenomeRNAi" id="80005"/>
<dbReference type="Pharos" id="Q9H7D0">
    <property type="development level" value="Tbio"/>
</dbReference>
<dbReference type="PRO" id="PR:Q9H7D0"/>
<dbReference type="Proteomes" id="UP000005640">
    <property type="component" value="Chromosome 8"/>
</dbReference>
<dbReference type="RNAct" id="Q9H7D0">
    <property type="molecule type" value="protein"/>
</dbReference>
<dbReference type="Bgee" id="ENSG00000147459">
    <property type="expression patterns" value="Expressed in ileal mucosa and 181 other cell types or tissues"/>
</dbReference>
<dbReference type="ExpressionAtlas" id="Q9H7D0">
    <property type="expression patterns" value="baseline and differential"/>
</dbReference>
<dbReference type="GO" id="GO:0070161">
    <property type="term" value="C:anchoring junction"/>
    <property type="evidence" value="ECO:0007669"/>
    <property type="project" value="UniProtKB-KW"/>
</dbReference>
<dbReference type="GO" id="GO:0042995">
    <property type="term" value="C:cell projection"/>
    <property type="evidence" value="ECO:0007669"/>
    <property type="project" value="UniProtKB-KW"/>
</dbReference>
<dbReference type="GO" id="GO:0005737">
    <property type="term" value="C:cytoplasm"/>
    <property type="evidence" value="ECO:0000250"/>
    <property type="project" value="UniProtKB"/>
</dbReference>
<dbReference type="GO" id="GO:0005829">
    <property type="term" value="C:cytosol"/>
    <property type="evidence" value="ECO:0000314"/>
    <property type="project" value="HPA"/>
</dbReference>
<dbReference type="GO" id="GO:0005886">
    <property type="term" value="C:plasma membrane"/>
    <property type="evidence" value="ECO:0000314"/>
    <property type="project" value="UniProtKB"/>
</dbReference>
<dbReference type="GO" id="GO:0002102">
    <property type="term" value="C:podosome"/>
    <property type="evidence" value="ECO:0007669"/>
    <property type="project" value="UniProtKB-SubCell"/>
</dbReference>
<dbReference type="GO" id="GO:0005096">
    <property type="term" value="F:GTPase activator activity"/>
    <property type="evidence" value="ECO:0007669"/>
    <property type="project" value="InterPro"/>
</dbReference>
<dbReference type="GO" id="GO:0005085">
    <property type="term" value="F:guanyl-nucleotide exchange factor activity"/>
    <property type="evidence" value="ECO:0000250"/>
    <property type="project" value="UniProtKB"/>
</dbReference>
<dbReference type="GO" id="GO:0031267">
    <property type="term" value="F:small GTPase binding"/>
    <property type="evidence" value="ECO:0000318"/>
    <property type="project" value="GO_Central"/>
</dbReference>
<dbReference type="GO" id="GO:0046849">
    <property type="term" value="P:bone remodeling"/>
    <property type="evidence" value="ECO:0007669"/>
    <property type="project" value="Ensembl"/>
</dbReference>
<dbReference type="GO" id="GO:0016477">
    <property type="term" value="P:cell migration"/>
    <property type="evidence" value="ECO:0000318"/>
    <property type="project" value="GO_Central"/>
</dbReference>
<dbReference type="GO" id="GO:0007520">
    <property type="term" value="P:myoblast fusion"/>
    <property type="evidence" value="ECO:0000318"/>
    <property type="project" value="GO_Central"/>
</dbReference>
<dbReference type="GO" id="GO:1904694">
    <property type="term" value="P:negative regulation of vascular associated smooth muscle contraction"/>
    <property type="evidence" value="ECO:0000315"/>
    <property type="project" value="BHF-UCL"/>
</dbReference>
<dbReference type="GO" id="GO:0071800">
    <property type="term" value="P:podosome assembly"/>
    <property type="evidence" value="ECO:0007669"/>
    <property type="project" value="Ensembl"/>
</dbReference>
<dbReference type="GO" id="GO:0010634">
    <property type="term" value="P:positive regulation of epithelial cell migration"/>
    <property type="evidence" value="ECO:0000315"/>
    <property type="project" value="UniProtKB"/>
</dbReference>
<dbReference type="GO" id="GO:1900026">
    <property type="term" value="P:positive regulation of substrate adhesion-dependent cell spreading"/>
    <property type="evidence" value="ECO:0000315"/>
    <property type="project" value="UniProtKB"/>
</dbReference>
<dbReference type="GO" id="GO:1904754">
    <property type="term" value="P:positive regulation of vascular associated smooth muscle cell migration"/>
    <property type="evidence" value="ECO:0000315"/>
    <property type="project" value="BHF-UCL"/>
</dbReference>
<dbReference type="GO" id="GO:0016601">
    <property type="term" value="P:Rac protein signal transduction"/>
    <property type="evidence" value="ECO:0007669"/>
    <property type="project" value="Ensembl"/>
</dbReference>
<dbReference type="CDD" id="cd11708">
    <property type="entry name" value="DHR2_DOCK5"/>
    <property type="match status" value="1"/>
</dbReference>
<dbReference type="CDD" id="cd12051">
    <property type="entry name" value="SH3_DOCK1_5_A"/>
    <property type="match status" value="1"/>
</dbReference>
<dbReference type="FunFam" id="1.20.58.740:FF:000004">
    <property type="entry name" value="Dedicator of cytokinesis protein 1"/>
    <property type="match status" value="1"/>
</dbReference>
<dbReference type="FunFam" id="1.25.40.410:FF:000004">
    <property type="entry name" value="Dedicator of cytokinesis protein 1"/>
    <property type="match status" value="1"/>
</dbReference>
<dbReference type="FunFam" id="2.60.40.150:FF:000044">
    <property type="entry name" value="dedicator of cytokinesis protein 1"/>
    <property type="match status" value="1"/>
</dbReference>
<dbReference type="FunFam" id="2.30.30.40:FF:000057">
    <property type="entry name" value="Dedicator of cytokinesis protein 4"/>
    <property type="match status" value="1"/>
</dbReference>
<dbReference type="FunFam" id="1.20.1270.350:FF:000001">
    <property type="entry name" value="dedicator of cytokinesis protein 4"/>
    <property type="match status" value="1"/>
</dbReference>
<dbReference type="Gene3D" id="1.20.58.740">
    <property type="match status" value="1"/>
</dbReference>
<dbReference type="Gene3D" id="1.25.40.410">
    <property type="match status" value="1"/>
</dbReference>
<dbReference type="Gene3D" id="2.60.40.150">
    <property type="entry name" value="C2 domain"/>
    <property type="match status" value="1"/>
</dbReference>
<dbReference type="Gene3D" id="1.20.1270.350">
    <property type="entry name" value="Dedicator of cytokinesis N-terminal subdomain"/>
    <property type="match status" value="1"/>
</dbReference>
<dbReference type="Gene3D" id="2.30.30.40">
    <property type="entry name" value="SH3 Domains"/>
    <property type="match status" value="1"/>
</dbReference>
<dbReference type="InterPro" id="IPR016024">
    <property type="entry name" value="ARM-type_fold"/>
</dbReference>
<dbReference type="InterPro" id="IPR027007">
    <property type="entry name" value="C2_DOCK-type_domain"/>
</dbReference>
<dbReference type="InterPro" id="IPR035892">
    <property type="entry name" value="C2_domain_sf"/>
</dbReference>
<dbReference type="InterPro" id="IPR030717">
    <property type="entry name" value="DHR2_DOCK5"/>
</dbReference>
<dbReference type="InterPro" id="IPR026791">
    <property type="entry name" value="DOCK"/>
</dbReference>
<dbReference type="InterPro" id="IPR047025">
    <property type="entry name" value="DOCK1_5_SH3"/>
</dbReference>
<dbReference type="InterPro" id="IPR043161">
    <property type="entry name" value="DOCK_C_lobe_A"/>
</dbReference>
<dbReference type="InterPro" id="IPR043162">
    <property type="entry name" value="DOCK_C_lobe_C"/>
</dbReference>
<dbReference type="InterPro" id="IPR032376">
    <property type="entry name" value="DOCK_N"/>
</dbReference>
<dbReference type="InterPro" id="IPR042455">
    <property type="entry name" value="DOCK_N_sub1"/>
</dbReference>
<dbReference type="InterPro" id="IPR027357">
    <property type="entry name" value="DOCKER_dom"/>
</dbReference>
<dbReference type="InterPro" id="IPR046769">
    <property type="entry name" value="DOCKER_Lobe_A"/>
</dbReference>
<dbReference type="InterPro" id="IPR046770">
    <property type="entry name" value="DOCKER_Lobe_B"/>
</dbReference>
<dbReference type="InterPro" id="IPR046773">
    <property type="entry name" value="DOCKER_Lobe_C"/>
</dbReference>
<dbReference type="InterPro" id="IPR036028">
    <property type="entry name" value="SH3-like_dom_sf"/>
</dbReference>
<dbReference type="InterPro" id="IPR001452">
    <property type="entry name" value="SH3_domain"/>
</dbReference>
<dbReference type="InterPro" id="IPR056372">
    <property type="entry name" value="TPR_DOCK"/>
</dbReference>
<dbReference type="PANTHER" id="PTHR45653">
    <property type="entry name" value="DEDICATOR OF CYTOKINESIS"/>
    <property type="match status" value="1"/>
</dbReference>
<dbReference type="PANTHER" id="PTHR45653:SF3">
    <property type="entry name" value="DEDICATOR OF CYTOKINESIS PROTEIN 5"/>
    <property type="match status" value="1"/>
</dbReference>
<dbReference type="Pfam" id="PF06920">
    <property type="entry name" value="DHR-2_Lobe_A"/>
    <property type="match status" value="1"/>
</dbReference>
<dbReference type="Pfam" id="PF20422">
    <property type="entry name" value="DHR-2_Lobe_B"/>
    <property type="match status" value="1"/>
</dbReference>
<dbReference type="Pfam" id="PF20421">
    <property type="entry name" value="DHR-2_Lobe_C"/>
    <property type="match status" value="1"/>
</dbReference>
<dbReference type="Pfam" id="PF14429">
    <property type="entry name" value="DOCK-C2"/>
    <property type="match status" value="1"/>
</dbReference>
<dbReference type="Pfam" id="PF16172">
    <property type="entry name" value="DOCK_N"/>
    <property type="match status" value="1"/>
</dbReference>
<dbReference type="Pfam" id="PF00018">
    <property type="entry name" value="SH3_1"/>
    <property type="match status" value="1"/>
</dbReference>
<dbReference type="Pfam" id="PF23554">
    <property type="entry name" value="TPR_DOCK"/>
    <property type="match status" value="1"/>
</dbReference>
<dbReference type="SMART" id="SM00326">
    <property type="entry name" value="SH3"/>
    <property type="match status" value="1"/>
</dbReference>
<dbReference type="SUPFAM" id="SSF48371">
    <property type="entry name" value="ARM repeat"/>
    <property type="match status" value="1"/>
</dbReference>
<dbReference type="SUPFAM" id="SSF50044">
    <property type="entry name" value="SH3-domain"/>
    <property type="match status" value="1"/>
</dbReference>
<dbReference type="PROSITE" id="PS51650">
    <property type="entry name" value="C2_DOCK"/>
    <property type="match status" value="1"/>
</dbReference>
<dbReference type="PROSITE" id="PS51651">
    <property type="entry name" value="DOCKER"/>
    <property type="match status" value="1"/>
</dbReference>
<dbReference type="PROSITE" id="PS50002">
    <property type="entry name" value="SH3"/>
    <property type="match status" value="1"/>
</dbReference>
<name>DOCK5_HUMAN</name>
<protein>
    <recommendedName>
        <fullName>Dedicator of cytokinesis protein 5</fullName>
    </recommendedName>
</protein>
<comment type="function">
    <text evidence="2 10">Guanine nucleotide exchange factor (GEF) for Rho and Rac. GEF proteins activate small GTPases by exchanging bound GDP for free GTP (By similarity). Along with DOCK1, mediates CRK/CRKL regulation of epithelial and endothelial cell spreading and migration on type IV collagen (PubMed:19004829).</text>
</comment>
<comment type="subunit">
    <text evidence="2 10">Interacts with CRK and CRKL (PubMed:19004829). Interacts (via N-terminus) with tensin TNS3 (via N-terminus); the interaction increases DOCK5 guanine nucleotide exchange activity towards Rac (By similarity). Interacts with ELMO1 (By similarity).</text>
</comment>
<comment type="interaction">
    <interactant intactId="EBI-1773858">
        <id>Q9H7D0</id>
    </interactant>
    <interactant intactId="EBI-886">
        <id>P46108</id>
        <label>CRK</label>
    </interactant>
    <organismsDiffer>false</organismsDiffer>
    <experiments>4</experiments>
</comment>
<comment type="interaction">
    <interactant intactId="EBI-25409131">
        <id>Q9H7D0-1</id>
    </interactant>
    <interactant intactId="EBI-446740">
        <id>Q14185</id>
        <label>DOCK1</label>
    </interactant>
    <organismsDiffer>false</organismsDiffer>
    <experiments>2</experiments>
</comment>
<comment type="subcellular location">
    <subcellularLocation>
        <location evidence="10">Cytoplasm</location>
    </subcellularLocation>
    <subcellularLocation>
        <location evidence="10">Cell membrane</location>
    </subcellularLocation>
    <subcellularLocation>
        <location evidence="2">Cell projection</location>
        <location evidence="2">Podosome</location>
    </subcellularLocation>
    <text evidence="10">Associated with the edge of the plasma membrane in Caco-2 intestinal epithelial cells spreading on type IV collagen.</text>
</comment>
<comment type="alternative products">
    <event type="alternative splicing"/>
    <isoform>
        <id>Q9H7D0-1</id>
        <name>1</name>
        <sequence type="displayed"/>
    </isoform>
    <isoform>
        <id>Q9H7D0-2</id>
        <name>2</name>
        <sequence type="described" ref="VSP_021868"/>
    </isoform>
</comment>
<comment type="domain">
    <text evidence="1">The DOCKER domain may mediate some GEF activity.</text>
</comment>
<comment type="similarity">
    <text evidence="5">Belongs to the DOCK family.</text>
</comment>
<comment type="sequence caution" evidence="12">
    <conflict type="erroneous initiation">
        <sequence resource="EMBL-CDS" id="BAB14962"/>
    </conflict>
</comment>
<comment type="sequence caution" evidence="12">
    <conflict type="erroneous initiation">
        <sequence resource="EMBL-CDS" id="BAC86503"/>
    </conflict>
</comment>
<evidence type="ECO:0000250" key="1"/>
<evidence type="ECO:0000250" key="2">
    <source>
        <dbReference type="UniProtKB" id="B2RY04"/>
    </source>
</evidence>
<evidence type="ECO:0000250" key="3">
    <source>
        <dbReference type="UniProtKB" id="Q8BUR4"/>
    </source>
</evidence>
<evidence type="ECO:0000255" key="4">
    <source>
        <dbReference type="PROSITE-ProRule" id="PRU00192"/>
    </source>
</evidence>
<evidence type="ECO:0000255" key="5">
    <source>
        <dbReference type="PROSITE-ProRule" id="PRU00983"/>
    </source>
</evidence>
<evidence type="ECO:0000255" key="6">
    <source>
        <dbReference type="PROSITE-ProRule" id="PRU00984"/>
    </source>
</evidence>
<evidence type="ECO:0000256" key="7">
    <source>
        <dbReference type="SAM" id="MobiDB-lite"/>
    </source>
</evidence>
<evidence type="ECO:0000269" key="8">
    <source>
    </source>
</evidence>
<evidence type="ECO:0000269" key="9">
    <source>
    </source>
</evidence>
<evidence type="ECO:0000269" key="10">
    <source>
    </source>
</evidence>
<evidence type="ECO:0000303" key="11">
    <source>
    </source>
</evidence>
<evidence type="ECO:0000305" key="12"/>
<evidence type="ECO:0007744" key="13">
    <source>
    </source>
</evidence>
<evidence type="ECO:0007744" key="14">
    <source>
    </source>
</evidence>
<evidence type="ECO:0007744" key="15">
    <source>
    </source>
</evidence>
<evidence type="ECO:0007744" key="16">
    <source>
    </source>
</evidence>
<evidence type="ECO:0007744" key="17">
    <source>
    </source>
</evidence>
<evidence type="ECO:0007744" key="18">
    <source>
    </source>
</evidence>
<evidence type="ECO:0007744" key="19">
    <source>
    </source>
</evidence>
<accession>Q9H7D0</accession>
<accession>B2RNY0</accession>
<accession>Q5XKD5</accession>
<accession>Q6AI11</accession>
<accession>Q6PJS6</accession>
<accession>Q6ZTS6</accession>
<gene>
    <name type="primary">DOCK5</name>
</gene>
<feature type="chain" id="PRO_0000189992" description="Dedicator of cytokinesis protein 5">
    <location>
        <begin position="1"/>
        <end position="1870"/>
    </location>
</feature>
<feature type="domain" description="SH3" evidence="4">
    <location>
        <begin position="8"/>
        <end position="69"/>
    </location>
</feature>
<feature type="domain" description="C2 DOCK-type" evidence="5">
    <location>
        <begin position="443"/>
        <end position="627"/>
    </location>
</feature>
<feature type="domain" description="DOCKER" evidence="6">
    <location>
        <begin position="1231"/>
        <end position="1642"/>
    </location>
</feature>
<feature type="region of interest" description="Disordered" evidence="7">
    <location>
        <begin position="1679"/>
        <end position="1702"/>
    </location>
</feature>
<feature type="region of interest" description="Disordered" evidence="7">
    <location>
        <begin position="1772"/>
        <end position="1870"/>
    </location>
</feature>
<feature type="compositionally biased region" description="Pro residues" evidence="7">
    <location>
        <begin position="1784"/>
        <end position="1794"/>
    </location>
</feature>
<feature type="compositionally biased region" description="Polar residues" evidence="7">
    <location>
        <begin position="1797"/>
        <end position="1808"/>
    </location>
</feature>
<feature type="compositionally biased region" description="Pro residues" evidence="7">
    <location>
        <begin position="1815"/>
        <end position="1824"/>
    </location>
</feature>
<feature type="modified residue" description="Phosphoserine" evidence="15">
    <location>
        <position position="365"/>
    </location>
</feature>
<feature type="modified residue" description="N6-acetyllysine" evidence="16">
    <location>
        <position position="818"/>
    </location>
</feature>
<feature type="modified residue" description="Phosphoserine" evidence="19">
    <location>
        <position position="1756"/>
    </location>
</feature>
<feature type="modified residue" description="Phosphoserine" evidence="18 19">
    <location>
        <position position="1766"/>
    </location>
</feature>
<feature type="modified residue" description="Phosphoserine" evidence="3">
    <location>
        <position position="1785"/>
    </location>
</feature>
<feature type="modified residue" description="Phosphoserine" evidence="14 19">
    <location>
        <position position="1789"/>
    </location>
</feature>
<feature type="modified residue" description="Phosphothreonine" evidence="14">
    <location>
        <position position="1794"/>
    </location>
</feature>
<feature type="modified residue" description="Phosphothreonine" evidence="13">
    <location>
        <position position="1814"/>
    </location>
</feature>
<feature type="modified residue" description="Phosphoserine" evidence="14 17 19">
    <location>
        <position position="1834"/>
    </location>
</feature>
<feature type="modified residue" description="Phosphoserine" evidence="14">
    <location>
        <position position="1869"/>
    </location>
</feature>
<feature type="splice variant" id="VSP_021868" description="In isoform 2." evidence="11">
    <location>
        <begin position="351"/>
        <end position="1870"/>
    </location>
</feature>
<feature type="sequence variant" id="VAR_033886" description="In dbSNP:rs17053341.">
    <original>Q</original>
    <variation>R</variation>
    <location>
        <position position="250"/>
    </location>
</feature>
<feature type="sequence variant" id="VAR_053065" description="In dbSNP:rs2271111.">
    <original>Q</original>
    <variation>R</variation>
    <location>
        <position position="1023"/>
    </location>
</feature>
<feature type="sequence variant" id="VAR_053066" description="In dbSNP:rs2659585." evidence="8 9">
    <original>K</original>
    <variation>R</variation>
    <location>
        <position position="1285"/>
    </location>
</feature>
<feature type="sequence variant" id="VAR_033887" description="In dbSNP:rs35688737.">
    <original>E</original>
    <variation>K</variation>
    <location>
        <position position="1836"/>
    </location>
</feature>
<feature type="sequence conflict" description="In Ref. 3; BAC86503." evidence="12" ref="3">
    <original>M</original>
    <variation>L</variation>
    <location>
        <position position="987"/>
    </location>
</feature>
<feature type="sequence conflict" description="In Ref. 3; BAC86503." evidence="12" ref="3">
    <original>G</original>
    <variation>E</variation>
    <location>
        <position position="1161"/>
    </location>
</feature>
<feature type="sequence conflict" description="In Ref. 4; CAH10503." evidence="12" ref="4">
    <original>S</original>
    <variation>Y</variation>
    <location>
        <position position="1548"/>
    </location>
</feature>
<feature type="sequence conflict" description="In Ref. 3; BAC86503." evidence="12" ref="3">
    <original>N</original>
    <variation>S</variation>
    <location>
        <position position="1833"/>
    </location>
</feature>
<feature type="sequence conflict" description="In Ref. 4; CAH10503." evidence="12" ref="4">
    <original>P</original>
    <variation>S</variation>
    <location>
        <position position="1842"/>
    </location>
</feature>
<keyword id="KW-0002">3D-structure</keyword>
<keyword id="KW-0007">Acetylation</keyword>
<keyword id="KW-0025">Alternative splicing</keyword>
<keyword id="KW-0965">Cell junction</keyword>
<keyword id="KW-1003">Cell membrane</keyword>
<keyword id="KW-0966">Cell projection</keyword>
<keyword id="KW-0963">Cytoplasm</keyword>
<keyword id="KW-0344">Guanine-nucleotide releasing factor</keyword>
<keyword id="KW-0472">Membrane</keyword>
<keyword id="KW-0597">Phosphoprotein</keyword>
<keyword id="KW-1267">Proteomics identification</keyword>
<keyword id="KW-1185">Reference proteome</keyword>
<keyword id="KW-0728">SH3 domain</keyword>
<organism>
    <name type="scientific">Homo sapiens</name>
    <name type="common">Human</name>
    <dbReference type="NCBI Taxonomy" id="9606"/>
    <lineage>
        <taxon>Eukaryota</taxon>
        <taxon>Metazoa</taxon>
        <taxon>Chordata</taxon>
        <taxon>Craniata</taxon>
        <taxon>Vertebrata</taxon>
        <taxon>Euteleostomi</taxon>
        <taxon>Mammalia</taxon>
        <taxon>Eutheria</taxon>
        <taxon>Euarchontoglires</taxon>
        <taxon>Primates</taxon>
        <taxon>Haplorrhini</taxon>
        <taxon>Catarrhini</taxon>
        <taxon>Hominidae</taxon>
        <taxon>Homo</taxon>
    </lineage>
</organism>